<protein>
    <recommendedName>
        <fullName evidence="1">Integration host factor subunit beta</fullName>
        <shortName evidence="1">IHF-beta</shortName>
    </recommendedName>
</protein>
<feature type="chain" id="PRO_0000105076" description="Integration host factor subunit beta">
    <location>
        <begin position="1"/>
        <end position="93"/>
    </location>
</feature>
<proteinExistence type="inferred from homology"/>
<name>IHFB_VIBVY</name>
<accession>Q7MLX5</accession>
<organism>
    <name type="scientific">Vibrio vulnificus (strain YJ016)</name>
    <dbReference type="NCBI Taxonomy" id="196600"/>
    <lineage>
        <taxon>Bacteria</taxon>
        <taxon>Pseudomonadati</taxon>
        <taxon>Pseudomonadota</taxon>
        <taxon>Gammaproteobacteria</taxon>
        <taxon>Vibrionales</taxon>
        <taxon>Vibrionaceae</taxon>
        <taxon>Vibrio</taxon>
    </lineage>
</organism>
<sequence length="93" mass="10629">MTKSELIERLCAEQTHLSAKEIEDAVKDILEHMASTLESGDRIEIRGFGSFSLHYREPRVGRNPKTGDKVELEGKYVPHFKPGKELRERVHIG</sequence>
<keyword id="KW-0233">DNA recombination</keyword>
<keyword id="KW-0238">DNA-binding</keyword>
<keyword id="KW-0804">Transcription</keyword>
<keyword id="KW-0805">Transcription regulation</keyword>
<keyword id="KW-0810">Translation regulation</keyword>
<gene>
    <name evidence="1" type="primary">ihfB</name>
    <name evidence="1" type="synonym">himD</name>
    <name type="ordered locus">VV1301</name>
</gene>
<evidence type="ECO:0000255" key="1">
    <source>
        <dbReference type="HAMAP-Rule" id="MF_00381"/>
    </source>
</evidence>
<reference key="1">
    <citation type="journal article" date="2003" name="Genome Res.">
        <title>Comparative genome analysis of Vibrio vulnificus, a marine pathogen.</title>
        <authorList>
            <person name="Chen C.-Y."/>
            <person name="Wu K.-M."/>
            <person name="Chang Y.-C."/>
            <person name="Chang C.-H."/>
            <person name="Tsai H.-C."/>
            <person name="Liao T.-L."/>
            <person name="Liu Y.-M."/>
            <person name="Chen H.-J."/>
            <person name="Shen A.B.-T."/>
            <person name="Li J.-C."/>
            <person name="Su T.-L."/>
            <person name="Shao C.-P."/>
            <person name="Lee C.-T."/>
            <person name="Hor L.-I."/>
            <person name="Tsai S.-F."/>
        </authorList>
    </citation>
    <scope>NUCLEOTIDE SEQUENCE [LARGE SCALE GENOMIC DNA]</scope>
    <source>
        <strain>YJ016</strain>
    </source>
</reference>
<dbReference type="EMBL" id="BA000037">
    <property type="protein sequence ID" value="BAC94065.1"/>
    <property type="molecule type" value="Genomic_DNA"/>
</dbReference>
<dbReference type="RefSeq" id="WP_011149987.1">
    <property type="nucleotide sequence ID" value="NC_005139.1"/>
</dbReference>
<dbReference type="SMR" id="Q7MLX5"/>
<dbReference type="STRING" id="672.VV93_v1c12170"/>
<dbReference type="KEGG" id="vvy:VV1301"/>
<dbReference type="PATRIC" id="fig|196600.6.peg.1292"/>
<dbReference type="eggNOG" id="COG0776">
    <property type="taxonomic scope" value="Bacteria"/>
</dbReference>
<dbReference type="HOGENOM" id="CLU_105066_2_0_6"/>
<dbReference type="Proteomes" id="UP000002675">
    <property type="component" value="Chromosome I"/>
</dbReference>
<dbReference type="GO" id="GO:0005694">
    <property type="term" value="C:chromosome"/>
    <property type="evidence" value="ECO:0007669"/>
    <property type="project" value="InterPro"/>
</dbReference>
<dbReference type="GO" id="GO:0005829">
    <property type="term" value="C:cytosol"/>
    <property type="evidence" value="ECO:0007669"/>
    <property type="project" value="TreeGrafter"/>
</dbReference>
<dbReference type="GO" id="GO:0003677">
    <property type="term" value="F:DNA binding"/>
    <property type="evidence" value="ECO:0007669"/>
    <property type="project" value="UniProtKB-UniRule"/>
</dbReference>
<dbReference type="GO" id="GO:0030527">
    <property type="term" value="F:structural constituent of chromatin"/>
    <property type="evidence" value="ECO:0007669"/>
    <property type="project" value="InterPro"/>
</dbReference>
<dbReference type="GO" id="GO:0006310">
    <property type="term" value="P:DNA recombination"/>
    <property type="evidence" value="ECO:0007669"/>
    <property type="project" value="UniProtKB-UniRule"/>
</dbReference>
<dbReference type="GO" id="GO:0006355">
    <property type="term" value="P:regulation of DNA-templated transcription"/>
    <property type="evidence" value="ECO:0007669"/>
    <property type="project" value="UniProtKB-UniRule"/>
</dbReference>
<dbReference type="GO" id="GO:0006417">
    <property type="term" value="P:regulation of translation"/>
    <property type="evidence" value="ECO:0007669"/>
    <property type="project" value="UniProtKB-UniRule"/>
</dbReference>
<dbReference type="CDD" id="cd13836">
    <property type="entry name" value="IHF_B"/>
    <property type="match status" value="1"/>
</dbReference>
<dbReference type="FunFam" id="4.10.520.10:FF:000003">
    <property type="entry name" value="Integration host factor subunit beta"/>
    <property type="match status" value="1"/>
</dbReference>
<dbReference type="Gene3D" id="4.10.520.10">
    <property type="entry name" value="IHF-like DNA-binding proteins"/>
    <property type="match status" value="1"/>
</dbReference>
<dbReference type="HAMAP" id="MF_00381">
    <property type="entry name" value="IHF_beta"/>
    <property type="match status" value="1"/>
</dbReference>
<dbReference type="InterPro" id="IPR000119">
    <property type="entry name" value="Hist_DNA-bd"/>
</dbReference>
<dbReference type="InterPro" id="IPR020816">
    <property type="entry name" value="Histone-like_DNA-bd_CS"/>
</dbReference>
<dbReference type="InterPro" id="IPR010992">
    <property type="entry name" value="IHF-like_DNA-bd_dom_sf"/>
</dbReference>
<dbReference type="InterPro" id="IPR005685">
    <property type="entry name" value="IHF_beta"/>
</dbReference>
<dbReference type="NCBIfam" id="TIGR00988">
    <property type="entry name" value="hip"/>
    <property type="match status" value="1"/>
</dbReference>
<dbReference type="NCBIfam" id="NF001222">
    <property type="entry name" value="PRK00199.1"/>
    <property type="match status" value="1"/>
</dbReference>
<dbReference type="PANTHER" id="PTHR33175">
    <property type="entry name" value="DNA-BINDING PROTEIN HU"/>
    <property type="match status" value="1"/>
</dbReference>
<dbReference type="PANTHER" id="PTHR33175:SF5">
    <property type="entry name" value="INTEGRATION HOST FACTOR SUBUNIT BETA"/>
    <property type="match status" value="1"/>
</dbReference>
<dbReference type="Pfam" id="PF00216">
    <property type="entry name" value="Bac_DNA_binding"/>
    <property type="match status" value="1"/>
</dbReference>
<dbReference type="PRINTS" id="PR01727">
    <property type="entry name" value="DNABINDINGHU"/>
</dbReference>
<dbReference type="SMART" id="SM00411">
    <property type="entry name" value="BHL"/>
    <property type="match status" value="1"/>
</dbReference>
<dbReference type="SUPFAM" id="SSF47729">
    <property type="entry name" value="IHF-like DNA-binding proteins"/>
    <property type="match status" value="1"/>
</dbReference>
<dbReference type="PROSITE" id="PS00045">
    <property type="entry name" value="HISTONE_LIKE"/>
    <property type="match status" value="1"/>
</dbReference>
<comment type="function">
    <text evidence="1">This protein is one of the two subunits of integration host factor, a specific DNA-binding protein that functions in genetic recombination as well as in transcriptional and translational control.</text>
</comment>
<comment type="subunit">
    <text evidence="1">Heterodimer of an alpha and a beta chain.</text>
</comment>
<comment type="similarity">
    <text evidence="1">Belongs to the bacterial histone-like protein family.</text>
</comment>